<sequence>MDATTIISLFILGSILVTSSILLSSFSSRLGIPILVIFLAIGMLAGVDGVGGIPFDNYPFAYMVSNLALAIILLDGGMRTQASSFRVALGPALSLATLGVLITSGLTGMMAAWLFNLDLIEGLLIGAIVGSTDAAAVFSLLGGKGLNERVGSTLEIESGSNDPMAVFLTITLIAMIQQHESSVSWMFVVDILQQFGLGIVIGLGGGYLLLQMINRIALPAGLYPLLALSGGILIFALTTALEGSGILAVYLCGFLLGNRPIRNRYGILQNFDGLAWLAQIAMFLVLGLLVNPSDLLPIAIPALILSAWMIFFARPLSVFAGLLPFRGFNLRERVFISWVGLRGAVPIILAVFPMMAGLENARLFFNVAFFVVLVSLLLQGTSLSWAAKKAKVVVPPVGRPVSRVGLDIHPENPWEQFVYQLSADKWCVGAALRDLHMPKETRIAALFRDNQLLHPTGSTRLREGDVLCVIGRERDLPALGKLFSQSPPVALDQRFFGDFILEASAKYADVALIYGLEDGREYRDKQQTLGEIVQQLLGAAPVVGDQVEFAGMIWTVAEKEDNEVLKIGVRVAEEEAES</sequence>
<evidence type="ECO:0000255" key="1">
    <source>
        <dbReference type="HAMAP-Rule" id="MF_01075"/>
    </source>
</evidence>
<reference key="1">
    <citation type="journal article" date="2006" name="Proc. Natl. Acad. Sci. U.S.A.">
        <title>Identification of genes subject to positive selection in uropathogenic strains of Escherichia coli: a comparative genomics approach.</title>
        <authorList>
            <person name="Chen S.L."/>
            <person name="Hung C.-S."/>
            <person name="Xu J."/>
            <person name="Reigstad C.S."/>
            <person name="Magrini V."/>
            <person name="Sabo A."/>
            <person name="Blasiar D."/>
            <person name="Bieri T."/>
            <person name="Meyer R.R."/>
            <person name="Ozersky P."/>
            <person name="Armstrong J.R."/>
            <person name="Fulton R.S."/>
            <person name="Latreille J.P."/>
            <person name="Spieth J."/>
            <person name="Hooton T.M."/>
            <person name="Mardis E.R."/>
            <person name="Hultgren S.J."/>
            <person name="Gordon J.I."/>
        </authorList>
    </citation>
    <scope>NUCLEOTIDE SEQUENCE [LARGE SCALE GENOMIC DNA]</scope>
    <source>
        <strain>UTI89 / UPEC</strain>
    </source>
</reference>
<proteinExistence type="inferred from homology"/>
<feature type="chain" id="PRO_0000278148" description="K(+)/H(+) antiporter NhaP2">
    <location>
        <begin position="1"/>
        <end position="578"/>
    </location>
</feature>
<feature type="transmembrane region" description="Helical" evidence="1">
    <location>
        <begin position="6"/>
        <end position="26"/>
    </location>
</feature>
<feature type="transmembrane region" description="Helical" evidence="1">
    <location>
        <begin position="30"/>
        <end position="50"/>
    </location>
</feature>
<feature type="transmembrane region" description="Helical" evidence="1">
    <location>
        <begin position="58"/>
        <end position="78"/>
    </location>
</feature>
<feature type="transmembrane region" description="Helical" evidence="1">
    <location>
        <begin position="87"/>
        <end position="107"/>
    </location>
</feature>
<feature type="transmembrane region" description="Helical" evidence="1">
    <location>
        <begin position="109"/>
        <end position="129"/>
    </location>
</feature>
<feature type="transmembrane region" description="Helical" evidence="1">
    <location>
        <begin position="156"/>
        <end position="176"/>
    </location>
</feature>
<feature type="transmembrane region" description="Helical" evidence="1">
    <location>
        <begin position="185"/>
        <end position="205"/>
    </location>
</feature>
<feature type="transmembrane region" description="Helical" evidence="1">
    <location>
        <begin position="216"/>
        <end position="236"/>
    </location>
</feature>
<feature type="transmembrane region" description="Helical" evidence="1">
    <location>
        <begin position="237"/>
        <end position="257"/>
    </location>
</feature>
<feature type="transmembrane region" description="Helical" evidence="1">
    <location>
        <begin position="270"/>
        <end position="290"/>
    </location>
</feature>
<feature type="transmembrane region" description="Helical" evidence="1">
    <location>
        <begin position="293"/>
        <end position="313"/>
    </location>
</feature>
<feature type="transmembrane region" description="Helical" evidence="1">
    <location>
        <begin position="334"/>
        <end position="354"/>
    </location>
</feature>
<feature type="transmembrane region" description="Helical" evidence="1">
    <location>
        <begin position="363"/>
        <end position="383"/>
    </location>
</feature>
<feature type="domain" description="RCK C-terminal" evidence="1">
    <location>
        <begin position="403"/>
        <end position="485"/>
    </location>
</feature>
<gene>
    <name evidence="1" type="primary">nhaP2</name>
    <name type="synonym">cvrA</name>
    <name type="ordered locus">UTI89_C1377</name>
</gene>
<accession>Q1RCQ5</accession>
<name>NHAP2_ECOUT</name>
<organism>
    <name type="scientific">Escherichia coli (strain UTI89 / UPEC)</name>
    <dbReference type="NCBI Taxonomy" id="364106"/>
    <lineage>
        <taxon>Bacteria</taxon>
        <taxon>Pseudomonadati</taxon>
        <taxon>Pseudomonadota</taxon>
        <taxon>Gammaproteobacteria</taxon>
        <taxon>Enterobacterales</taxon>
        <taxon>Enterobacteriaceae</taxon>
        <taxon>Escherichia</taxon>
    </lineage>
</organism>
<keyword id="KW-0050">Antiport</keyword>
<keyword id="KW-0997">Cell inner membrane</keyword>
<keyword id="KW-1003">Cell membrane</keyword>
<keyword id="KW-0406">Ion transport</keyword>
<keyword id="KW-0472">Membrane</keyword>
<keyword id="KW-0630">Potassium</keyword>
<keyword id="KW-0633">Potassium transport</keyword>
<keyword id="KW-0812">Transmembrane</keyword>
<keyword id="KW-1133">Transmembrane helix</keyword>
<keyword id="KW-0813">Transport</keyword>
<protein>
    <recommendedName>
        <fullName evidence="1">K(+)/H(+) antiporter NhaP2</fullName>
    </recommendedName>
    <alternativeName>
        <fullName evidence="1">Potassium/proton antiporter NhaP2</fullName>
    </alternativeName>
</protein>
<comment type="function">
    <text evidence="1">K(+)/H(+) antiporter that extrudes potassium in exchange for external protons and maintains the internal concentration of potassium under toxic levels.</text>
</comment>
<comment type="catalytic activity">
    <reaction evidence="1">
        <text>K(+)(in) + H(+)(out) = K(+)(out) + H(+)(in)</text>
        <dbReference type="Rhea" id="RHEA:29467"/>
        <dbReference type="ChEBI" id="CHEBI:15378"/>
        <dbReference type="ChEBI" id="CHEBI:29103"/>
    </reaction>
    <physiologicalReaction direction="left-to-right" evidence="1">
        <dbReference type="Rhea" id="RHEA:29468"/>
    </physiologicalReaction>
</comment>
<comment type="subcellular location">
    <subcellularLocation>
        <location evidence="1">Cell inner membrane</location>
        <topology evidence="1">Multi-pass membrane protein</topology>
    </subcellularLocation>
</comment>
<comment type="similarity">
    <text evidence="1">Belongs to the monovalent cation:proton antiporter 1 (CPA1) transporter (TC 2.A.36) family. NhaP2 subfamily.</text>
</comment>
<dbReference type="EMBL" id="CP000243">
    <property type="protein sequence ID" value="ABE06859.1"/>
    <property type="molecule type" value="Genomic_DNA"/>
</dbReference>
<dbReference type="RefSeq" id="WP_000340206.1">
    <property type="nucleotide sequence ID" value="NZ_CP064825.1"/>
</dbReference>
<dbReference type="SMR" id="Q1RCQ5"/>
<dbReference type="KEGG" id="eci:UTI89_C1377"/>
<dbReference type="HOGENOM" id="CLU_005912_9_2_6"/>
<dbReference type="Proteomes" id="UP000001952">
    <property type="component" value="Chromosome"/>
</dbReference>
<dbReference type="GO" id="GO:0005886">
    <property type="term" value="C:plasma membrane"/>
    <property type="evidence" value="ECO:0007669"/>
    <property type="project" value="UniProtKB-SubCell"/>
</dbReference>
<dbReference type="GO" id="GO:0050660">
    <property type="term" value="F:flavin adenine dinucleotide binding"/>
    <property type="evidence" value="ECO:0007669"/>
    <property type="project" value="InterPro"/>
</dbReference>
<dbReference type="GO" id="GO:0015386">
    <property type="term" value="F:potassium:proton antiporter activity"/>
    <property type="evidence" value="ECO:0007669"/>
    <property type="project" value="UniProtKB-UniRule"/>
</dbReference>
<dbReference type="GO" id="GO:0006884">
    <property type="term" value="P:cell volume homeostasis"/>
    <property type="evidence" value="ECO:0007669"/>
    <property type="project" value="InterPro"/>
</dbReference>
<dbReference type="FunFam" id="1.20.1530.20:FF:000002">
    <property type="entry name" value="K(+)/H(+) antiporter NhaP2"/>
    <property type="match status" value="1"/>
</dbReference>
<dbReference type="FunFam" id="3.30.465.10:FF:000009">
    <property type="entry name" value="K(+)/H(+) antiporter NhaP2"/>
    <property type="match status" value="1"/>
</dbReference>
<dbReference type="FunFam" id="3.30.70.1450:FF:000007">
    <property type="entry name" value="K(+)/H(+) antiporter NhaP2"/>
    <property type="match status" value="1"/>
</dbReference>
<dbReference type="Gene3D" id="1.20.1530.20">
    <property type="match status" value="1"/>
</dbReference>
<dbReference type="Gene3D" id="3.30.465.10">
    <property type="match status" value="1"/>
</dbReference>
<dbReference type="Gene3D" id="3.30.70.1450">
    <property type="entry name" value="Regulator of K+ conductance, C-terminal domain"/>
    <property type="match status" value="1"/>
</dbReference>
<dbReference type="HAMAP" id="MF_01075">
    <property type="entry name" value="NhaP2"/>
    <property type="match status" value="1"/>
</dbReference>
<dbReference type="InterPro" id="IPR006153">
    <property type="entry name" value="Cation/H_exchanger_TM"/>
</dbReference>
<dbReference type="InterPro" id="IPR036318">
    <property type="entry name" value="FAD-bd_PCMH-like_sf"/>
</dbReference>
<dbReference type="InterPro" id="IPR016169">
    <property type="entry name" value="FAD-bd_PCMH_sub2"/>
</dbReference>
<dbReference type="InterPro" id="IPR038770">
    <property type="entry name" value="Na+/solute_symporter_sf"/>
</dbReference>
<dbReference type="InterPro" id="IPR023729">
    <property type="entry name" value="NhaP2"/>
</dbReference>
<dbReference type="InterPro" id="IPR006037">
    <property type="entry name" value="RCK_C"/>
</dbReference>
<dbReference type="InterPro" id="IPR036721">
    <property type="entry name" value="RCK_C_sf"/>
</dbReference>
<dbReference type="InterPro" id="IPR005170">
    <property type="entry name" value="Transptr-assoc_dom"/>
</dbReference>
<dbReference type="NCBIfam" id="NF003714">
    <property type="entry name" value="PRK05326.1-1"/>
    <property type="match status" value="1"/>
</dbReference>
<dbReference type="NCBIfam" id="NF003715">
    <property type="entry name" value="PRK05326.1-2"/>
    <property type="match status" value="1"/>
</dbReference>
<dbReference type="NCBIfam" id="NF003716">
    <property type="entry name" value="PRK05326.1-3"/>
    <property type="match status" value="1"/>
</dbReference>
<dbReference type="PANTHER" id="PTHR32507:SF7">
    <property type="entry name" value="K(+)_H(+) ANTIPORTER NHAP2"/>
    <property type="match status" value="1"/>
</dbReference>
<dbReference type="PANTHER" id="PTHR32507">
    <property type="entry name" value="NA(+)/H(+) ANTIPORTER 1"/>
    <property type="match status" value="1"/>
</dbReference>
<dbReference type="Pfam" id="PF03471">
    <property type="entry name" value="CorC_HlyC"/>
    <property type="match status" value="1"/>
</dbReference>
<dbReference type="Pfam" id="PF00999">
    <property type="entry name" value="Na_H_Exchanger"/>
    <property type="match status" value="1"/>
</dbReference>
<dbReference type="Pfam" id="PF02080">
    <property type="entry name" value="TrkA_C"/>
    <property type="match status" value="1"/>
</dbReference>
<dbReference type="SMART" id="SM01091">
    <property type="entry name" value="CorC_HlyC"/>
    <property type="match status" value="1"/>
</dbReference>
<dbReference type="SUPFAM" id="SSF56176">
    <property type="entry name" value="FAD-binding/transporter-associated domain-like"/>
    <property type="match status" value="1"/>
</dbReference>
<dbReference type="SUPFAM" id="SSF116726">
    <property type="entry name" value="TrkA C-terminal domain-like"/>
    <property type="match status" value="1"/>
</dbReference>
<dbReference type="PROSITE" id="PS51202">
    <property type="entry name" value="RCK_C"/>
    <property type="match status" value="1"/>
</dbReference>